<accession>Q9Y6L7</accession>
<accession>A6NDK0</accession>
<accession>Q2M1H1</accession>
<accession>Q6PJN5</accession>
<accession>Q9UQ00</accession>
<proteinExistence type="evidence at protein level"/>
<sequence>MPRATALGALVSLLLLLPLPRGAGGLGERPDATADYSELDGEEGTEQQLEHYHDPCKAAVFWGDIALDEDDLKLFHIDKARDWTKQTVGATGHSTGGLEEQASESSPDTTAMDTGTKEAGKDGRENTTLLHSPGTLHAAAKTFSPRVRRATTSRTERIWPGGVIPYVIGGNFTGSQRAIFKQAMRHWEKHTCVTFIERTDEESFIVFSYRTCGCCSYVGRRGGGPQAISIGKNCDKFGIVAHELGHVVGFWHEHTRPDRDQHVTIIRENIQPGQEYNFLKMEAGEVSSLGETYDFDSIMHYARNTFSRGVFLDTILPRQDDNGVRPTIGQRVRLSQGDIAQARKLYKCPACGETLQDTTGNFSAPGFPNGYPSYSHCVWRISVTPGEKIVLNFTSMDLFKSRLCWYDYVEVRDGYWRKAPLLGRFCGDKIPEPLVSTDSRLWVEFRSSSNILGKGFFAAYEATCGGDMNKDAGQIQSPNYPDDYRPSKECVWRITVSEGFHVGLTFQAFEIERHDSCAYDYLEVRDGPTEESALIGHFCGYEKPEDVKSSSNRLWMKFVSDGSINKAGFAANFFKEVDECSWPDHGGCEHRCVNTLGSYKCACDPGYELAADKKMCEVACGGFITKLNGTITSPGWPKEYPTNKNCVWQVVAPAQYRISLQFEVFELEGNDVCKYDFVEVRSGLSPDAKLHGRFCGSETPEVITSQSNNMRVEFKSDNTVSKRGFRAHFFSDKDECAKDNGGCQHECVNTFGSYLCRCRNGYWLHENGHDCKEAGCAHKISSVEGTLASPNWPDKYPSRRECTWNISSTAGHRVKLTFNEFEIEQHQECAYDHLEMYDGPDSLAPILGRFCGSKKPDPTVASGSSMFLRFYSDASVQRKGFQAVHSTECGGRLKAEVQTKELYSHAQFGDNNYPSEARCDWVIVAEDGYGVELTFRTFEVEEEADCGYDYMEAYDGYDSSAPRLGRFCGSGPLEEIYSAGDSLMIRFRTDDTINKKGFHARYTSTKFQDALHMKK</sequence>
<reference key="1">
    <citation type="journal article" date="1999" name="Dev. Biol.">
        <title>Mammalian BMP-1/Tolloid-related metalloproteinases, including novel family member mammalian Tolloid-like 2, have differential enzymatic activities and distributions of expression relevant to patterning and skeletogenesis.</title>
        <authorList>
            <person name="Scott I.C."/>
            <person name="Blitz I.L."/>
            <person name="Pappano W.N."/>
            <person name="Imamura Y."/>
            <person name="Clark T.G."/>
            <person name="Steiglitz B.M."/>
            <person name="Thomas C.L."/>
            <person name="Maas S.A."/>
            <person name="Takahara K."/>
            <person name="Cho K.W."/>
            <person name="Greenspan D.S."/>
        </authorList>
    </citation>
    <scope>NUCLEOTIDE SEQUENCE [MRNA]</scope>
    <scope>PROTEIN SEQUENCE OF 150-154</scope>
    <source>
        <tissue>Placenta</tissue>
    </source>
</reference>
<reference key="2">
    <citation type="journal article" date="1999" name="DNA Res.">
        <title>Prediction of the coding sequences of unidentified human genes. XIII. The complete sequences of 100 new cDNA clones from brain which code for large proteins in vitro.</title>
        <authorList>
            <person name="Nagase T."/>
            <person name="Ishikawa K."/>
            <person name="Suyama M."/>
            <person name="Kikuno R."/>
            <person name="Hirosawa M."/>
            <person name="Miyajima N."/>
            <person name="Tanaka A."/>
            <person name="Kotani H."/>
            <person name="Nomura N."/>
            <person name="Ohara O."/>
        </authorList>
    </citation>
    <scope>NUCLEOTIDE SEQUENCE [LARGE SCALE MRNA]</scope>
    <source>
        <tissue>Brain</tissue>
    </source>
</reference>
<reference key="3">
    <citation type="submission" date="1999-02" db="EMBL/GenBank/DDBJ databases">
        <authorList>
            <person name="Ohara O."/>
            <person name="Nagase T."/>
            <person name="Kikuno R."/>
        </authorList>
    </citation>
    <scope>SEQUENCE REVISION</scope>
</reference>
<reference key="4">
    <citation type="journal article" date="2004" name="Nature">
        <title>The DNA sequence and comparative analysis of human chromosome 10.</title>
        <authorList>
            <person name="Deloukas P."/>
            <person name="Earthrowl M.E."/>
            <person name="Grafham D.V."/>
            <person name="Rubenfield M."/>
            <person name="French L."/>
            <person name="Steward C.A."/>
            <person name="Sims S.K."/>
            <person name="Jones M.C."/>
            <person name="Searle S."/>
            <person name="Scott C."/>
            <person name="Howe K."/>
            <person name="Hunt S.E."/>
            <person name="Andrews T.D."/>
            <person name="Gilbert J.G.R."/>
            <person name="Swarbreck D."/>
            <person name="Ashurst J.L."/>
            <person name="Taylor A."/>
            <person name="Battles J."/>
            <person name="Bird C.P."/>
            <person name="Ainscough R."/>
            <person name="Almeida J.P."/>
            <person name="Ashwell R.I.S."/>
            <person name="Ambrose K.D."/>
            <person name="Babbage A.K."/>
            <person name="Bagguley C.L."/>
            <person name="Bailey J."/>
            <person name="Banerjee R."/>
            <person name="Bates K."/>
            <person name="Beasley H."/>
            <person name="Bray-Allen S."/>
            <person name="Brown A.J."/>
            <person name="Brown J.Y."/>
            <person name="Burford D.C."/>
            <person name="Burrill W."/>
            <person name="Burton J."/>
            <person name="Cahill P."/>
            <person name="Camire D."/>
            <person name="Carter N.P."/>
            <person name="Chapman J.C."/>
            <person name="Clark S.Y."/>
            <person name="Clarke G."/>
            <person name="Clee C.M."/>
            <person name="Clegg S."/>
            <person name="Corby N."/>
            <person name="Coulson A."/>
            <person name="Dhami P."/>
            <person name="Dutta I."/>
            <person name="Dunn M."/>
            <person name="Faulkner L."/>
            <person name="Frankish A."/>
            <person name="Frankland J.A."/>
            <person name="Garner P."/>
            <person name="Garnett J."/>
            <person name="Gribble S."/>
            <person name="Griffiths C."/>
            <person name="Grocock R."/>
            <person name="Gustafson E."/>
            <person name="Hammond S."/>
            <person name="Harley J.L."/>
            <person name="Hart E."/>
            <person name="Heath P.D."/>
            <person name="Ho T.P."/>
            <person name="Hopkins B."/>
            <person name="Horne J."/>
            <person name="Howden P.J."/>
            <person name="Huckle E."/>
            <person name="Hynds C."/>
            <person name="Johnson C."/>
            <person name="Johnson D."/>
            <person name="Kana A."/>
            <person name="Kay M."/>
            <person name="Kimberley A.M."/>
            <person name="Kershaw J.K."/>
            <person name="Kokkinaki M."/>
            <person name="Laird G.K."/>
            <person name="Lawlor S."/>
            <person name="Lee H.M."/>
            <person name="Leongamornlert D.A."/>
            <person name="Laird G."/>
            <person name="Lloyd C."/>
            <person name="Lloyd D.M."/>
            <person name="Loveland J."/>
            <person name="Lovell J."/>
            <person name="McLaren S."/>
            <person name="McLay K.E."/>
            <person name="McMurray A."/>
            <person name="Mashreghi-Mohammadi M."/>
            <person name="Matthews L."/>
            <person name="Milne S."/>
            <person name="Nickerson T."/>
            <person name="Nguyen M."/>
            <person name="Overton-Larty E."/>
            <person name="Palmer S.A."/>
            <person name="Pearce A.V."/>
            <person name="Peck A.I."/>
            <person name="Pelan S."/>
            <person name="Phillimore B."/>
            <person name="Porter K."/>
            <person name="Rice C.M."/>
            <person name="Rogosin A."/>
            <person name="Ross M.T."/>
            <person name="Sarafidou T."/>
            <person name="Sehra H.K."/>
            <person name="Shownkeen R."/>
            <person name="Skuce C.D."/>
            <person name="Smith M."/>
            <person name="Standring L."/>
            <person name="Sycamore N."/>
            <person name="Tester J."/>
            <person name="Thorpe A."/>
            <person name="Torcasso W."/>
            <person name="Tracey A."/>
            <person name="Tromans A."/>
            <person name="Tsolas J."/>
            <person name="Wall M."/>
            <person name="Walsh J."/>
            <person name="Wang H."/>
            <person name="Weinstock K."/>
            <person name="West A.P."/>
            <person name="Willey D.L."/>
            <person name="Whitehead S.L."/>
            <person name="Wilming L."/>
            <person name="Wray P.W."/>
            <person name="Young L."/>
            <person name="Chen Y."/>
            <person name="Lovering R.C."/>
            <person name="Moschonas N.K."/>
            <person name="Siebert R."/>
            <person name="Fechtel K."/>
            <person name="Bentley D."/>
            <person name="Durbin R.M."/>
            <person name="Hubbard T."/>
            <person name="Doucette-Stamm L."/>
            <person name="Beck S."/>
            <person name="Smith D.R."/>
            <person name="Rogers J."/>
        </authorList>
    </citation>
    <scope>NUCLEOTIDE SEQUENCE [LARGE SCALE GENOMIC DNA]</scope>
</reference>
<reference key="5">
    <citation type="journal article" date="2004" name="Genome Res.">
        <title>The status, quality, and expansion of the NIH full-length cDNA project: the Mammalian Gene Collection (MGC).</title>
        <authorList>
            <consortium name="The MGC Project Team"/>
        </authorList>
    </citation>
    <scope>NUCLEOTIDE SEQUENCE [LARGE SCALE MRNA]</scope>
    <source>
        <tissue>Ovary</tissue>
    </source>
</reference>
<reference key="6">
    <citation type="journal article" date="2001" name="J. Biol. Chem.">
        <title>Multiple bone morphogenetic protein 1-related mammalian metalloproteinases process pro-lysyl oxidase at the correct physiological site and control lysyl oxidase activation in mouse embryo fibroblast cultures.</title>
        <authorList>
            <person name="Uzel M.I."/>
            <person name="Scott I.C."/>
            <person name="Babakhanlou-Chase H."/>
            <person name="Palamakumbura A.H."/>
            <person name="Pappano W.N."/>
            <person name="Hong H.-H."/>
            <person name="Greenspan D.S."/>
            <person name="Trackman P.C."/>
        </authorList>
    </citation>
    <scope>CHARACTERIZATION</scope>
</reference>
<name>TLL2_HUMAN</name>
<feature type="signal peptide" evidence="3">
    <location>
        <begin position="1"/>
        <end position="25"/>
    </location>
</feature>
<feature type="propeptide" id="PRO_0000046036" evidence="8">
    <location>
        <begin position="26"/>
        <end position="149"/>
    </location>
</feature>
<feature type="chain" id="PRO_0000046037" description="Tolloid-like protein 2">
    <location>
        <begin position="150"/>
        <end position="1015"/>
    </location>
</feature>
<feature type="domain" description="Peptidase M12A" evidence="6">
    <location>
        <begin position="149"/>
        <end position="349"/>
    </location>
</feature>
<feature type="domain" description="CUB 1" evidence="4">
    <location>
        <begin position="351"/>
        <end position="463"/>
    </location>
</feature>
<feature type="domain" description="CUB 2" evidence="4">
    <location>
        <begin position="464"/>
        <end position="576"/>
    </location>
</feature>
<feature type="domain" description="EGF-like 1; calcium-binding" evidence="5">
    <location>
        <begin position="576"/>
        <end position="617"/>
    </location>
</feature>
<feature type="domain" description="CUB 3" evidence="4">
    <location>
        <begin position="620"/>
        <end position="732"/>
    </location>
</feature>
<feature type="domain" description="EGF-like 2; calcium-binding" evidence="5">
    <location>
        <begin position="732"/>
        <end position="772"/>
    </location>
</feature>
<feature type="domain" description="CUB 4" evidence="4">
    <location>
        <begin position="776"/>
        <end position="888"/>
    </location>
</feature>
<feature type="domain" description="CUB 5" evidence="4">
    <location>
        <begin position="889"/>
        <end position="1005"/>
    </location>
</feature>
<feature type="region of interest" description="Disordered" evidence="7">
    <location>
        <begin position="24"/>
        <end position="49"/>
    </location>
</feature>
<feature type="region of interest" description="Disordered" evidence="7">
    <location>
        <begin position="88"/>
        <end position="130"/>
    </location>
</feature>
<feature type="compositionally biased region" description="Polar residues" evidence="7">
    <location>
        <begin position="103"/>
        <end position="113"/>
    </location>
</feature>
<feature type="compositionally biased region" description="Basic and acidic residues" evidence="7">
    <location>
        <begin position="115"/>
        <end position="125"/>
    </location>
</feature>
<feature type="active site" evidence="6">
    <location>
        <position position="243"/>
    </location>
</feature>
<feature type="binding site" evidence="6">
    <location>
        <position position="242"/>
    </location>
    <ligand>
        <name>Zn(2+)</name>
        <dbReference type="ChEBI" id="CHEBI:29105"/>
        <note>catalytic</note>
    </ligand>
</feature>
<feature type="binding site" evidence="6">
    <location>
        <position position="246"/>
    </location>
    <ligand>
        <name>Zn(2+)</name>
        <dbReference type="ChEBI" id="CHEBI:29105"/>
        <note>catalytic</note>
    </ligand>
</feature>
<feature type="binding site" evidence="6">
    <location>
        <position position="252"/>
    </location>
    <ligand>
        <name>Zn(2+)</name>
        <dbReference type="ChEBI" id="CHEBI:29105"/>
        <note>catalytic</note>
    </ligand>
</feature>
<feature type="modified residue" description="Omega-N-methylarginine" evidence="2">
    <location>
        <position position="963"/>
    </location>
</feature>
<feature type="modified residue" description="Omega-N-methylarginine" evidence="2">
    <location>
        <position position="966"/>
    </location>
</feature>
<feature type="glycosylation site" description="N-linked (GlcNAc...) asparagine" evidence="3">
    <location>
        <position position="171"/>
    </location>
</feature>
<feature type="glycosylation site" description="N-linked (GlcNAc...) asparagine" evidence="3">
    <location>
        <position position="361"/>
    </location>
</feature>
<feature type="glycosylation site" description="N-linked (GlcNAc...) asparagine" evidence="3">
    <location>
        <position position="392"/>
    </location>
</feature>
<feature type="glycosylation site" description="N-linked (GlcNAc...) asparagine" evidence="3">
    <location>
        <position position="628"/>
    </location>
</feature>
<feature type="glycosylation site" description="N-linked (GlcNAc...) asparagine" evidence="3">
    <location>
        <position position="805"/>
    </location>
</feature>
<feature type="disulfide bond" evidence="6">
    <location>
        <begin position="192"/>
        <end position="348"/>
    </location>
</feature>
<feature type="disulfide bond" evidence="6">
    <location>
        <begin position="212"/>
        <end position="234"/>
    </location>
</feature>
<feature type="disulfide bond" evidence="6">
    <location>
        <begin position="214"/>
        <end position="215"/>
    </location>
</feature>
<feature type="disulfide bond" evidence="1">
    <location>
        <begin position="351"/>
        <end position="377"/>
    </location>
</feature>
<feature type="disulfide bond" evidence="1">
    <location>
        <begin position="404"/>
        <end position="426"/>
    </location>
</feature>
<feature type="disulfide bond" evidence="1">
    <location>
        <begin position="464"/>
        <end position="490"/>
    </location>
</feature>
<feature type="disulfide bond" evidence="1">
    <location>
        <begin position="517"/>
        <end position="539"/>
    </location>
</feature>
<feature type="disulfide bond" evidence="1">
    <location>
        <begin position="580"/>
        <end position="592"/>
    </location>
</feature>
<feature type="disulfide bond" evidence="1">
    <location>
        <begin position="588"/>
        <end position="601"/>
    </location>
</feature>
<feature type="disulfide bond" evidence="1">
    <location>
        <begin position="603"/>
        <end position="616"/>
    </location>
</feature>
<feature type="disulfide bond" evidence="1">
    <location>
        <begin position="620"/>
        <end position="646"/>
    </location>
</feature>
<feature type="disulfide bond" evidence="1">
    <location>
        <begin position="673"/>
        <end position="695"/>
    </location>
</feature>
<feature type="disulfide bond" evidence="1">
    <location>
        <begin position="736"/>
        <end position="747"/>
    </location>
</feature>
<feature type="disulfide bond" evidence="1">
    <location>
        <begin position="743"/>
        <end position="756"/>
    </location>
</feature>
<feature type="disulfide bond" evidence="1">
    <location>
        <begin position="758"/>
        <end position="771"/>
    </location>
</feature>
<feature type="disulfide bond" evidence="1">
    <location>
        <begin position="776"/>
        <end position="802"/>
    </location>
</feature>
<feature type="disulfide bond" evidence="1">
    <location>
        <begin position="829"/>
        <end position="851"/>
    </location>
</feature>
<feature type="disulfide bond" evidence="1">
    <location>
        <begin position="889"/>
        <end position="919"/>
    </location>
</feature>
<feature type="disulfide bond" evidence="1">
    <location>
        <begin position="946"/>
        <end position="968"/>
    </location>
</feature>
<feature type="sequence conflict" description="In Ref. 2; BAA76776." evidence="9" ref="2">
    <original>T</original>
    <variation>M</variation>
    <location>
        <position position="495"/>
    </location>
</feature>
<feature type="sequence conflict" description="In Ref. 5; AAH13871." evidence="9" ref="5">
    <original>EVDECSWPDHGGCEHRCV</original>
    <variation>GKKKKKKKKKKKKKKKKK</variation>
    <location>
        <begin position="576"/>
        <end position="593"/>
    </location>
</feature>
<protein>
    <recommendedName>
        <fullName>Tolloid-like protein 2</fullName>
        <ecNumber>3.4.24.-</ecNumber>
    </recommendedName>
</protein>
<evidence type="ECO:0000250" key="1"/>
<evidence type="ECO:0000250" key="2">
    <source>
        <dbReference type="UniProtKB" id="Q9WVM6"/>
    </source>
</evidence>
<evidence type="ECO:0000255" key="3"/>
<evidence type="ECO:0000255" key="4">
    <source>
        <dbReference type="PROSITE-ProRule" id="PRU00059"/>
    </source>
</evidence>
<evidence type="ECO:0000255" key="5">
    <source>
        <dbReference type="PROSITE-ProRule" id="PRU00076"/>
    </source>
</evidence>
<evidence type="ECO:0000255" key="6">
    <source>
        <dbReference type="PROSITE-ProRule" id="PRU01211"/>
    </source>
</evidence>
<evidence type="ECO:0000256" key="7">
    <source>
        <dbReference type="SAM" id="MobiDB-lite"/>
    </source>
</evidence>
<evidence type="ECO:0000269" key="8">
    <source>
    </source>
</evidence>
<evidence type="ECO:0000305" key="9"/>
<keyword id="KW-0106">Calcium</keyword>
<keyword id="KW-0165">Cleavage on pair of basic residues</keyword>
<keyword id="KW-0217">Developmental protein</keyword>
<keyword id="KW-0221">Differentiation</keyword>
<keyword id="KW-0903">Direct protein sequencing</keyword>
<keyword id="KW-1015">Disulfide bond</keyword>
<keyword id="KW-0245">EGF-like domain</keyword>
<keyword id="KW-0325">Glycoprotein</keyword>
<keyword id="KW-0378">Hydrolase</keyword>
<keyword id="KW-0479">Metal-binding</keyword>
<keyword id="KW-0482">Metalloprotease</keyword>
<keyword id="KW-0488">Methylation</keyword>
<keyword id="KW-0645">Protease</keyword>
<keyword id="KW-1267">Proteomics identification</keyword>
<keyword id="KW-1185">Reference proteome</keyword>
<keyword id="KW-0677">Repeat</keyword>
<keyword id="KW-0964">Secreted</keyword>
<keyword id="KW-0732">Signal</keyword>
<keyword id="KW-0862">Zinc</keyword>
<keyword id="KW-0865">Zymogen</keyword>
<comment type="function">
    <text>Protease which specifically processes pro-lysyl oxidase. Required for the embryonic development. Predominant protease, which in the development, influences dorsal-ventral patterning and skeletogenesis.</text>
</comment>
<comment type="cofactor">
    <cofactor evidence="6">
        <name>Zn(2+)</name>
        <dbReference type="ChEBI" id="CHEBI:29105"/>
    </cofactor>
    <text evidence="6">Binds 1 zinc ion per subunit.</text>
</comment>
<comment type="subcellular location">
    <subcellularLocation>
        <location evidence="9">Secreted</location>
    </subcellularLocation>
</comment>
<comment type="sequence caution" evidence="9">
    <conflict type="erroneous initiation">
        <sequence resource="EMBL-CDS" id="BAA76776"/>
    </conflict>
</comment>
<gene>
    <name type="primary">TLL2</name>
    <name type="synonym">KIAA0932</name>
</gene>
<organism>
    <name type="scientific">Homo sapiens</name>
    <name type="common">Human</name>
    <dbReference type="NCBI Taxonomy" id="9606"/>
    <lineage>
        <taxon>Eukaryota</taxon>
        <taxon>Metazoa</taxon>
        <taxon>Chordata</taxon>
        <taxon>Craniata</taxon>
        <taxon>Vertebrata</taxon>
        <taxon>Euteleostomi</taxon>
        <taxon>Mammalia</taxon>
        <taxon>Eutheria</taxon>
        <taxon>Euarchontoglires</taxon>
        <taxon>Primates</taxon>
        <taxon>Haplorrhini</taxon>
        <taxon>Catarrhini</taxon>
        <taxon>Hominidae</taxon>
        <taxon>Homo</taxon>
    </lineage>
</organism>
<dbReference type="EC" id="3.4.24.-"/>
<dbReference type="EMBL" id="AF059516">
    <property type="protein sequence ID" value="AAD42979.1"/>
    <property type="molecule type" value="mRNA"/>
</dbReference>
<dbReference type="EMBL" id="AB023149">
    <property type="protein sequence ID" value="BAA76776.2"/>
    <property type="status" value="ALT_INIT"/>
    <property type="molecule type" value="mRNA"/>
</dbReference>
<dbReference type="EMBL" id="AL138765">
    <property type="status" value="NOT_ANNOTATED_CDS"/>
    <property type="molecule type" value="Genomic_DNA"/>
</dbReference>
<dbReference type="EMBL" id="AL136181">
    <property type="status" value="NOT_ANNOTATED_CDS"/>
    <property type="molecule type" value="Genomic_DNA"/>
</dbReference>
<dbReference type="EMBL" id="AL391136">
    <property type="status" value="NOT_ANNOTATED_CDS"/>
    <property type="molecule type" value="Genomic_DNA"/>
</dbReference>
<dbReference type="EMBL" id="BC013871">
    <property type="protein sequence ID" value="AAH13871.1"/>
    <property type="molecule type" value="mRNA"/>
</dbReference>
<dbReference type="EMBL" id="BC112341">
    <property type="protein sequence ID" value="AAI12342.1"/>
    <property type="molecule type" value="mRNA"/>
</dbReference>
<dbReference type="EMBL" id="BC112366">
    <property type="protein sequence ID" value="AAI12367.1"/>
    <property type="molecule type" value="mRNA"/>
</dbReference>
<dbReference type="EMBL" id="BC113577">
    <property type="protein sequence ID" value="AAI13578.1"/>
    <property type="molecule type" value="mRNA"/>
</dbReference>
<dbReference type="CCDS" id="CCDS7449.1"/>
<dbReference type="RefSeq" id="NP_036597.1">
    <property type="nucleotide sequence ID" value="NM_012465.4"/>
</dbReference>
<dbReference type="SMR" id="Q9Y6L7"/>
<dbReference type="BioGRID" id="112948">
    <property type="interactions" value="30"/>
</dbReference>
<dbReference type="FunCoup" id="Q9Y6L7">
    <property type="interactions" value="195"/>
</dbReference>
<dbReference type="IntAct" id="Q9Y6L7">
    <property type="interactions" value="13"/>
</dbReference>
<dbReference type="STRING" id="9606.ENSP00000350630"/>
<dbReference type="BindingDB" id="Q9Y6L7"/>
<dbReference type="ChEMBL" id="CHEMBL4295995"/>
<dbReference type="DrugBank" id="DB01989">
    <property type="generic name" value="Methyl N-{[(1R)-1-({1-[(benzyloxy)carbonyl]-L-prolyl-6-ammonio-L-norleucyl}amino)-2-phenylethyl](hydroxy)phosphoryl}-L-alanyl-L-prolinate"/>
</dbReference>
<dbReference type="MEROPS" id="M12.018"/>
<dbReference type="GlyConnect" id="1820">
    <property type="glycosylation" value="1 N-Linked glycan (1 site)"/>
</dbReference>
<dbReference type="GlyCosmos" id="Q9Y6L7">
    <property type="glycosylation" value="5 sites, 1 glycan"/>
</dbReference>
<dbReference type="GlyGen" id="Q9Y6L7">
    <property type="glycosylation" value="10 sites, 2 N-linked glycans (2 sites), 2 O-linked glycans (2 sites)"/>
</dbReference>
<dbReference type="iPTMnet" id="Q9Y6L7"/>
<dbReference type="PhosphoSitePlus" id="Q9Y6L7"/>
<dbReference type="BioMuta" id="TLL2"/>
<dbReference type="DMDM" id="74762080"/>
<dbReference type="jPOST" id="Q9Y6L7"/>
<dbReference type="MassIVE" id="Q9Y6L7"/>
<dbReference type="PaxDb" id="9606-ENSP00000350630"/>
<dbReference type="PeptideAtlas" id="Q9Y6L7"/>
<dbReference type="ProteomicsDB" id="86720"/>
<dbReference type="Antibodypedia" id="53639">
    <property type="antibodies" value="48 antibodies from 18 providers"/>
</dbReference>
<dbReference type="DNASU" id="7093"/>
<dbReference type="Ensembl" id="ENST00000357947.4">
    <property type="protein sequence ID" value="ENSP00000350630.3"/>
    <property type="gene ID" value="ENSG00000095587.9"/>
</dbReference>
<dbReference type="GeneID" id="7093"/>
<dbReference type="KEGG" id="hsa:7093"/>
<dbReference type="MANE-Select" id="ENST00000357947.4">
    <property type="protein sequence ID" value="ENSP00000350630.3"/>
    <property type="RefSeq nucleotide sequence ID" value="NM_012465.4"/>
    <property type="RefSeq protein sequence ID" value="NP_036597.1"/>
</dbReference>
<dbReference type="UCSC" id="uc001kml.3">
    <property type="organism name" value="human"/>
</dbReference>
<dbReference type="AGR" id="HGNC:11844"/>
<dbReference type="CTD" id="7093"/>
<dbReference type="DisGeNET" id="7093"/>
<dbReference type="GeneCards" id="TLL2"/>
<dbReference type="HGNC" id="HGNC:11844">
    <property type="gene designation" value="TLL2"/>
</dbReference>
<dbReference type="HPA" id="ENSG00000095587">
    <property type="expression patterns" value="Tissue enhanced (brain, heart muscle, tongue)"/>
</dbReference>
<dbReference type="MalaCards" id="TLL2"/>
<dbReference type="MIM" id="606743">
    <property type="type" value="gene"/>
</dbReference>
<dbReference type="neXtProt" id="NX_Q9Y6L7"/>
<dbReference type="OpenTargets" id="ENSG00000095587"/>
<dbReference type="PharmGKB" id="PA36546"/>
<dbReference type="VEuPathDB" id="HostDB:ENSG00000095587"/>
<dbReference type="eggNOG" id="KOG3714">
    <property type="taxonomic scope" value="Eukaryota"/>
</dbReference>
<dbReference type="GeneTree" id="ENSGT00940000160572"/>
<dbReference type="HOGENOM" id="CLU_005140_0_0_1"/>
<dbReference type="InParanoid" id="Q9Y6L7"/>
<dbReference type="OMA" id="WTKQTVG"/>
<dbReference type="OrthoDB" id="431034at2759"/>
<dbReference type="PAN-GO" id="Q9Y6L7">
    <property type="GO annotations" value="4 GO annotations based on evolutionary models"/>
</dbReference>
<dbReference type="PhylomeDB" id="Q9Y6L7"/>
<dbReference type="TreeFam" id="TF314351"/>
<dbReference type="PathwayCommons" id="Q9Y6L7"/>
<dbReference type="Reactome" id="R-HSA-1474228">
    <property type="pathway name" value="Degradation of the extracellular matrix"/>
</dbReference>
<dbReference type="Reactome" id="R-HSA-1650814">
    <property type="pathway name" value="Collagen biosynthesis and modifying enzymes"/>
</dbReference>
<dbReference type="Reactome" id="R-HSA-2214320">
    <property type="pathway name" value="Anchoring fibril formation"/>
</dbReference>
<dbReference type="Reactome" id="R-HSA-2243919">
    <property type="pathway name" value="Crosslinking of collagen fibrils"/>
</dbReference>
<dbReference type="SignaLink" id="Q9Y6L7"/>
<dbReference type="BioGRID-ORCS" id="7093">
    <property type="hits" value="12 hits in 1152 CRISPR screens"/>
</dbReference>
<dbReference type="ChiTaRS" id="TLL2">
    <property type="organism name" value="human"/>
</dbReference>
<dbReference type="GeneWiki" id="TLL2"/>
<dbReference type="GenomeRNAi" id="7093"/>
<dbReference type="Pharos" id="Q9Y6L7">
    <property type="development level" value="Tchem"/>
</dbReference>
<dbReference type="PRO" id="PR:Q9Y6L7"/>
<dbReference type="Proteomes" id="UP000005640">
    <property type="component" value="Chromosome 10"/>
</dbReference>
<dbReference type="RNAct" id="Q9Y6L7">
    <property type="molecule type" value="protein"/>
</dbReference>
<dbReference type="Bgee" id="ENSG00000095587">
    <property type="expression patterns" value="Expressed in buccal mucosa cell and 114 other cell types or tissues"/>
</dbReference>
<dbReference type="GO" id="GO:0005576">
    <property type="term" value="C:extracellular region"/>
    <property type="evidence" value="ECO:0000304"/>
    <property type="project" value="Reactome"/>
</dbReference>
<dbReference type="GO" id="GO:0005615">
    <property type="term" value="C:extracellular space"/>
    <property type="evidence" value="ECO:0000318"/>
    <property type="project" value="GO_Central"/>
</dbReference>
<dbReference type="GO" id="GO:0005509">
    <property type="term" value="F:calcium ion binding"/>
    <property type="evidence" value="ECO:0007669"/>
    <property type="project" value="InterPro"/>
</dbReference>
<dbReference type="GO" id="GO:0004222">
    <property type="term" value="F:metalloendopeptidase activity"/>
    <property type="evidence" value="ECO:0000318"/>
    <property type="project" value="GO_Central"/>
</dbReference>
<dbReference type="GO" id="GO:0004252">
    <property type="term" value="F:serine-type endopeptidase activity"/>
    <property type="evidence" value="ECO:0000304"/>
    <property type="project" value="Reactome"/>
</dbReference>
<dbReference type="GO" id="GO:0008270">
    <property type="term" value="F:zinc ion binding"/>
    <property type="evidence" value="ECO:0007669"/>
    <property type="project" value="InterPro"/>
</dbReference>
<dbReference type="GO" id="GO:0030154">
    <property type="term" value="P:cell differentiation"/>
    <property type="evidence" value="ECO:0007669"/>
    <property type="project" value="UniProtKB-KW"/>
</dbReference>
<dbReference type="GO" id="GO:0030199">
    <property type="term" value="P:collagen fibril organization"/>
    <property type="evidence" value="ECO:0000304"/>
    <property type="project" value="Reactome"/>
</dbReference>
<dbReference type="GO" id="GO:0009953">
    <property type="term" value="P:dorsal/ventral pattern formation"/>
    <property type="evidence" value="ECO:0000318"/>
    <property type="project" value="GO_Central"/>
</dbReference>
<dbReference type="GO" id="GO:0048632">
    <property type="term" value="P:negative regulation of skeletal muscle tissue growth"/>
    <property type="evidence" value="ECO:0007669"/>
    <property type="project" value="Ensembl"/>
</dbReference>
<dbReference type="GO" id="GO:0016485">
    <property type="term" value="P:protein processing"/>
    <property type="evidence" value="ECO:0000318"/>
    <property type="project" value="GO_Central"/>
</dbReference>
<dbReference type="CDD" id="cd00041">
    <property type="entry name" value="CUB"/>
    <property type="match status" value="5"/>
</dbReference>
<dbReference type="CDD" id="cd00054">
    <property type="entry name" value="EGF_CA"/>
    <property type="match status" value="1"/>
</dbReference>
<dbReference type="CDD" id="cd04281">
    <property type="entry name" value="ZnMc_BMP1_TLD"/>
    <property type="match status" value="1"/>
</dbReference>
<dbReference type="FunFam" id="2.10.25.10:FF:000022">
    <property type="entry name" value="Metalloendopeptidase"/>
    <property type="match status" value="2"/>
</dbReference>
<dbReference type="FunFam" id="2.60.120.290:FF:000004">
    <property type="entry name" value="Metalloendopeptidase"/>
    <property type="match status" value="1"/>
</dbReference>
<dbReference type="FunFam" id="2.60.120.290:FF:000007">
    <property type="entry name" value="Metalloendopeptidase"/>
    <property type="match status" value="1"/>
</dbReference>
<dbReference type="FunFam" id="2.60.120.290:FF:000009">
    <property type="entry name" value="Metalloendopeptidase"/>
    <property type="match status" value="1"/>
</dbReference>
<dbReference type="FunFam" id="2.60.120.290:FF:000011">
    <property type="entry name" value="Metalloendopeptidase"/>
    <property type="match status" value="1"/>
</dbReference>
<dbReference type="FunFam" id="2.60.120.290:FF:000014">
    <property type="entry name" value="Metalloendopeptidase"/>
    <property type="match status" value="1"/>
</dbReference>
<dbReference type="FunFam" id="3.40.390.10:FF:000004">
    <property type="entry name" value="Metalloendopeptidase"/>
    <property type="match status" value="1"/>
</dbReference>
<dbReference type="Gene3D" id="3.40.390.10">
    <property type="entry name" value="Collagenase (Catalytic Domain)"/>
    <property type="match status" value="1"/>
</dbReference>
<dbReference type="Gene3D" id="2.10.25.10">
    <property type="entry name" value="Laminin"/>
    <property type="match status" value="2"/>
</dbReference>
<dbReference type="Gene3D" id="2.60.120.290">
    <property type="entry name" value="Spermadhesin, CUB domain"/>
    <property type="match status" value="5"/>
</dbReference>
<dbReference type="InterPro" id="IPR015446">
    <property type="entry name" value="BMP_1/tolloid-like"/>
</dbReference>
<dbReference type="InterPro" id="IPR000859">
    <property type="entry name" value="CUB_dom"/>
</dbReference>
<dbReference type="InterPro" id="IPR001881">
    <property type="entry name" value="EGF-like_Ca-bd_dom"/>
</dbReference>
<dbReference type="InterPro" id="IPR000742">
    <property type="entry name" value="EGF-like_dom"/>
</dbReference>
<dbReference type="InterPro" id="IPR000152">
    <property type="entry name" value="EGF-type_Asp/Asn_hydroxyl_site"/>
</dbReference>
<dbReference type="InterPro" id="IPR018097">
    <property type="entry name" value="EGF_Ca-bd_CS"/>
</dbReference>
<dbReference type="InterPro" id="IPR024079">
    <property type="entry name" value="MetalloPept_cat_dom_sf"/>
</dbReference>
<dbReference type="InterPro" id="IPR049883">
    <property type="entry name" value="NOTCH1_EGF-like"/>
</dbReference>
<dbReference type="InterPro" id="IPR001506">
    <property type="entry name" value="Peptidase_M12A"/>
</dbReference>
<dbReference type="InterPro" id="IPR006026">
    <property type="entry name" value="Peptidase_Metallo"/>
</dbReference>
<dbReference type="InterPro" id="IPR035914">
    <property type="entry name" value="Sperma_CUB_dom_sf"/>
</dbReference>
<dbReference type="InterPro" id="IPR034036">
    <property type="entry name" value="ZnMP_TLD/BMP1"/>
</dbReference>
<dbReference type="PANTHER" id="PTHR24251:SF45">
    <property type="entry name" value="METALLOENDOPEPTIDASE"/>
    <property type="match status" value="1"/>
</dbReference>
<dbReference type="PANTHER" id="PTHR24251">
    <property type="entry name" value="OVOCHYMASE-RELATED"/>
    <property type="match status" value="1"/>
</dbReference>
<dbReference type="Pfam" id="PF01400">
    <property type="entry name" value="Astacin"/>
    <property type="match status" value="1"/>
</dbReference>
<dbReference type="Pfam" id="PF00431">
    <property type="entry name" value="CUB"/>
    <property type="match status" value="5"/>
</dbReference>
<dbReference type="Pfam" id="PF07645">
    <property type="entry name" value="EGF_CA"/>
    <property type="match status" value="1"/>
</dbReference>
<dbReference type="Pfam" id="PF14670">
    <property type="entry name" value="FXa_inhibition"/>
    <property type="match status" value="1"/>
</dbReference>
<dbReference type="PIRSF" id="PIRSF001199">
    <property type="entry name" value="BMP_1/tolloid-like"/>
    <property type="match status" value="1"/>
</dbReference>
<dbReference type="PRINTS" id="PR00480">
    <property type="entry name" value="ASTACIN"/>
</dbReference>
<dbReference type="SMART" id="SM00042">
    <property type="entry name" value="CUB"/>
    <property type="match status" value="5"/>
</dbReference>
<dbReference type="SMART" id="SM00181">
    <property type="entry name" value="EGF"/>
    <property type="match status" value="2"/>
</dbReference>
<dbReference type="SMART" id="SM00179">
    <property type="entry name" value="EGF_CA"/>
    <property type="match status" value="2"/>
</dbReference>
<dbReference type="SMART" id="SM00235">
    <property type="entry name" value="ZnMc"/>
    <property type="match status" value="1"/>
</dbReference>
<dbReference type="SUPFAM" id="SSF57196">
    <property type="entry name" value="EGF/Laminin"/>
    <property type="match status" value="2"/>
</dbReference>
<dbReference type="SUPFAM" id="SSF55486">
    <property type="entry name" value="Metalloproteases ('zincins'), catalytic domain"/>
    <property type="match status" value="1"/>
</dbReference>
<dbReference type="SUPFAM" id="SSF49854">
    <property type="entry name" value="Spermadhesin, CUB domain"/>
    <property type="match status" value="5"/>
</dbReference>
<dbReference type="PROSITE" id="PS51864">
    <property type="entry name" value="ASTACIN"/>
    <property type="match status" value="1"/>
</dbReference>
<dbReference type="PROSITE" id="PS01180">
    <property type="entry name" value="CUB"/>
    <property type="match status" value="5"/>
</dbReference>
<dbReference type="PROSITE" id="PS01186">
    <property type="entry name" value="EGF_2"/>
    <property type="match status" value="2"/>
</dbReference>
<dbReference type="PROSITE" id="PS50026">
    <property type="entry name" value="EGF_3"/>
    <property type="match status" value="2"/>
</dbReference>
<dbReference type="PROSITE" id="PS01187">
    <property type="entry name" value="EGF_CA"/>
    <property type="match status" value="2"/>
</dbReference>
<dbReference type="PROSITE" id="PS00142">
    <property type="entry name" value="ZINC_PROTEASE"/>
    <property type="match status" value="1"/>
</dbReference>